<proteinExistence type="inferred from homology"/>
<keyword id="KW-0963">Cytoplasm</keyword>
<keyword id="KW-0539">Nucleus</keyword>
<keyword id="KW-1185">Reference proteome</keyword>
<name>YKM6_SCHPO</name>
<accession>Q9C0Y8</accession>
<reference key="1">
    <citation type="journal article" date="2002" name="Nature">
        <title>The genome sequence of Schizosaccharomyces pombe.</title>
        <authorList>
            <person name="Wood V."/>
            <person name="Gwilliam R."/>
            <person name="Rajandream M.A."/>
            <person name="Lyne M.H."/>
            <person name="Lyne R."/>
            <person name="Stewart A."/>
            <person name="Sgouros J.G."/>
            <person name="Peat N."/>
            <person name="Hayles J."/>
            <person name="Baker S.G."/>
            <person name="Basham D."/>
            <person name="Bowman S."/>
            <person name="Brooks K."/>
            <person name="Brown D."/>
            <person name="Brown S."/>
            <person name="Chillingworth T."/>
            <person name="Churcher C.M."/>
            <person name="Collins M."/>
            <person name="Connor R."/>
            <person name="Cronin A."/>
            <person name="Davis P."/>
            <person name="Feltwell T."/>
            <person name="Fraser A."/>
            <person name="Gentles S."/>
            <person name="Goble A."/>
            <person name="Hamlin N."/>
            <person name="Harris D.E."/>
            <person name="Hidalgo J."/>
            <person name="Hodgson G."/>
            <person name="Holroyd S."/>
            <person name="Hornsby T."/>
            <person name="Howarth S."/>
            <person name="Huckle E.J."/>
            <person name="Hunt S."/>
            <person name="Jagels K."/>
            <person name="James K.D."/>
            <person name="Jones L."/>
            <person name="Jones M."/>
            <person name="Leather S."/>
            <person name="McDonald S."/>
            <person name="McLean J."/>
            <person name="Mooney P."/>
            <person name="Moule S."/>
            <person name="Mungall K.L."/>
            <person name="Murphy L.D."/>
            <person name="Niblett D."/>
            <person name="Odell C."/>
            <person name="Oliver K."/>
            <person name="O'Neil S."/>
            <person name="Pearson D."/>
            <person name="Quail M.A."/>
            <person name="Rabbinowitsch E."/>
            <person name="Rutherford K.M."/>
            <person name="Rutter S."/>
            <person name="Saunders D."/>
            <person name="Seeger K."/>
            <person name="Sharp S."/>
            <person name="Skelton J."/>
            <person name="Simmonds M.N."/>
            <person name="Squares R."/>
            <person name="Squares S."/>
            <person name="Stevens K."/>
            <person name="Taylor K."/>
            <person name="Taylor R.G."/>
            <person name="Tivey A."/>
            <person name="Walsh S.V."/>
            <person name="Warren T."/>
            <person name="Whitehead S."/>
            <person name="Woodward J.R."/>
            <person name="Volckaert G."/>
            <person name="Aert R."/>
            <person name="Robben J."/>
            <person name="Grymonprez B."/>
            <person name="Weltjens I."/>
            <person name="Vanstreels E."/>
            <person name="Rieger M."/>
            <person name="Schaefer M."/>
            <person name="Mueller-Auer S."/>
            <person name="Gabel C."/>
            <person name="Fuchs M."/>
            <person name="Duesterhoeft A."/>
            <person name="Fritzc C."/>
            <person name="Holzer E."/>
            <person name="Moestl D."/>
            <person name="Hilbert H."/>
            <person name="Borzym K."/>
            <person name="Langer I."/>
            <person name="Beck A."/>
            <person name="Lehrach H."/>
            <person name="Reinhardt R."/>
            <person name="Pohl T.M."/>
            <person name="Eger P."/>
            <person name="Zimmermann W."/>
            <person name="Wedler H."/>
            <person name="Wambutt R."/>
            <person name="Purnelle B."/>
            <person name="Goffeau A."/>
            <person name="Cadieu E."/>
            <person name="Dreano S."/>
            <person name="Gloux S."/>
            <person name="Lelaure V."/>
            <person name="Mottier S."/>
            <person name="Galibert F."/>
            <person name="Aves S.J."/>
            <person name="Xiang Z."/>
            <person name="Hunt C."/>
            <person name="Moore K."/>
            <person name="Hurst S.M."/>
            <person name="Lucas M."/>
            <person name="Rochet M."/>
            <person name="Gaillardin C."/>
            <person name="Tallada V.A."/>
            <person name="Garzon A."/>
            <person name="Thode G."/>
            <person name="Daga R.R."/>
            <person name="Cruzado L."/>
            <person name="Jimenez J."/>
            <person name="Sanchez M."/>
            <person name="del Rey F."/>
            <person name="Benito J."/>
            <person name="Dominguez A."/>
            <person name="Revuelta J.L."/>
            <person name="Moreno S."/>
            <person name="Armstrong J."/>
            <person name="Forsburg S.L."/>
            <person name="Cerutti L."/>
            <person name="Lowe T."/>
            <person name="McCombie W.R."/>
            <person name="Paulsen I."/>
            <person name="Potashkin J."/>
            <person name="Shpakovski G.V."/>
            <person name="Ussery D."/>
            <person name="Barrell B.G."/>
            <person name="Nurse P."/>
        </authorList>
    </citation>
    <scope>NUCLEOTIDE SEQUENCE [LARGE SCALE GENOMIC DNA]</scope>
    <source>
        <strain>972 / ATCC 24843</strain>
    </source>
</reference>
<reference key="2">
    <citation type="journal article" date="2006" name="Nat. Biotechnol.">
        <title>ORFeome cloning and global analysis of protein localization in the fission yeast Schizosaccharomyces pombe.</title>
        <authorList>
            <person name="Matsuyama A."/>
            <person name="Arai R."/>
            <person name="Yashiroda Y."/>
            <person name="Shirai A."/>
            <person name="Kamata A."/>
            <person name="Sekido S."/>
            <person name="Kobayashi Y."/>
            <person name="Hashimoto A."/>
            <person name="Hamamoto M."/>
            <person name="Hiraoka Y."/>
            <person name="Horinouchi S."/>
            <person name="Yoshida M."/>
        </authorList>
    </citation>
    <scope>SUBCELLULAR LOCATION [LARGE SCALE ANALYSIS]</scope>
</reference>
<dbReference type="EMBL" id="CU329670">
    <property type="protein sequence ID" value="CAC36902.1"/>
    <property type="molecule type" value="Genomic_DNA"/>
</dbReference>
<dbReference type="RefSeq" id="NP_593992.1">
    <property type="nucleotide sequence ID" value="NM_001019418.2"/>
</dbReference>
<dbReference type="SMR" id="Q9C0Y8"/>
<dbReference type="BioGRID" id="279960">
    <property type="interactions" value="3"/>
</dbReference>
<dbReference type="FunCoup" id="Q9C0Y8">
    <property type="interactions" value="10"/>
</dbReference>
<dbReference type="STRING" id="284812.Q9C0Y8"/>
<dbReference type="ESTHER" id="schpo-q9c0y8">
    <property type="family name" value="Fusarinine_C_esterase_sidJ"/>
</dbReference>
<dbReference type="PaxDb" id="4896-SPAPB24D3.06c.1"/>
<dbReference type="EnsemblFungi" id="SPAPB24D3.06c.1">
    <property type="protein sequence ID" value="SPAPB24D3.06c.1:pep"/>
    <property type="gene ID" value="SPAPB24D3.06c"/>
</dbReference>
<dbReference type="KEGG" id="spo:2543543"/>
<dbReference type="PomBase" id="SPAPB24D3.06c"/>
<dbReference type="VEuPathDB" id="FungiDB:SPAPB24D3.06c"/>
<dbReference type="eggNOG" id="KOG4840">
    <property type="taxonomic scope" value="Eukaryota"/>
</dbReference>
<dbReference type="HOGENOM" id="CLU_049633_3_0_1"/>
<dbReference type="InParanoid" id="Q9C0Y8"/>
<dbReference type="OMA" id="PPWVNKE"/>
<dbReference type="PhylomeDB" id="Q9C0Y8"/>
<dbReference type="PRO" id="PR:Q9C0Y8"/>
<dbReference type="Proteomes" id="UP000002485">
    <property type="component" value="Chromosome I"/>
</dbReference>
<dbReference type="GO" id="GO:0005829">
    <property type="term" value="C:cytosol"/>
    <property type="evidence" value="ECO:0007005"/>
    <property type="project" value="PomBase"/>
</dbReference>
<dbReference type="GO" id="GO:0005634">
    <property type="term" value="C:nucleus"/>
    <property type="evidence" value="ECO:0007005"/>
    <property type="project" value="PomBase"/>
</dbReference>
<dbReference type="GO" id="GO:0016787">
    <property type="term" value="F:hydrolase activity"/>
    <property type="evidence" value="ECO:0000255"/>
    <property type="project" value="PomBase"/>
</dbReference>
<dbReference type="Gene3D" id="3.40.50.1820">
    <property type="entry name" value="alpha/beta hydrolase"/>
    <property type="match status" value="1"/>
</dbReference>
<dbReference type="InterPro" id="IPR029058">
    <property type="entry name" value="AB_hydrolase_fold"/>
</dbReference>
<dbReference type="InterPro" id="IPR013744">
    <property type="entry name" value="SidJ"/>
</dbReference>
<dbReference type="PANTHER" id="PTHR31591">
    <property type="entry name" value="UPF0613 PROTEIN PB24D3.06C"/>
    <property type="match status" value="1"/>
</dbReference>
<dbReference type="PANTHER" id="PTHR31591:SF1">
    <property type="entry name" value="UPF0613 PROTEIN PB24D3.06C"/>
    <property type="match status" value="1"/>
</dbReference>
<dbReference type="Pfam" id="PF08538">
    <property type="entry name" value="DUF1749"/>
    <property type="match status" value="1"/>
</dbReference>
<dbReference type="SUPFAM" id="SSF53474">
    <property type="entry name" value="alpha/beta-Hydrolases"/>
    <property type="match status" value="1"/>
</dbReference>
<gene>
    <name type="ORF">SPAPB24D3.06c</name>
</gene>
<protein>
    <recommendedName>
        <fullName>UPF0613 protein PB24D3.06c</fullName>
    </recommendedName>
</protein>
<feature type="chain" id="PRO_0000343142" description="UPF0613 protein PB24D3.06c">
    <location>
        <begin position="1"/>
        <end position="316"/>
    </location>
</feature>
<organism>
    <name type="scientific">Schizosaccharomyces pombe (strain 972 / ATCC 24843)</name>
    <name type="common">Fission yeast</name>
    <dbReference type="NCBI Taxonomy" id="284812"/>
    <lineage>
        <taxon>Eukaryota</taxon>
        <taxon>Fungi</taxon>
        <taxon>Dikarya</taxon>
        <taxon>Ascomycota</taxon>
        <taxon>Taphrinomycotina</taxon>
        <taxon>Schizosaccharomycetes</taxon>
        <taxon>Schizosaccharomycetales</taxon>
        <taxon>Schizosaccharomycetaceae</taxon>
        <taxon>Schizosaccharomyces</taxon>
    </lineage>
</organism>
<sequence length="316" mass="34734">MSASHPGILHEYTERLVAFELVGKSNVTLTSNVTRSLLLFVGGLGDGLLTVPYVQELVNPLDEIGWSIVQVQTQSSYIGWGTGSLKRDDEDLHKAVDYFLHIGGADFSTRKIVLMGHSTGSQNVLYYLTQSILPNYLIAGIAQAPVSDREAAYQFNGKEKTKELVDWVKAEYLDKGLGNDVLPRSKVENFFGEVPTSANRCIDLTDVRGNDDFFSSDLSADDFAKTFGNLKEISGSTAHSQLILLMSERDEFVSPSTDKAQLLNRFRESIRPTTSNSSLSGIIPGATHNVGPKSSPEALKWLINQLITALRSFIDQ</sequence>
<evidence type="ECO:0000269" key="1">
    <source>
    </source>
</evidence>
<evidence type="ECO:0000305" key="2"/>
<comment type="subcellular location">
    <subcellularLocation>
        <location evidence="1">Cytoplasm</location>
    </subcellularLocation>
    <subcellularLocation>
        <location evidence="1">Nucleus</location>
    </subcellularLocation>
</comment>
<comment type="similarity">
    <text evidence="2">Belongs to the UPF0613 family.</text>
</comment>